<feature type="chain" id="PRO_1000089384" description="Dihydroxy-acid dehydratase">
    <location>
        <begin position="1"/>
        <end position="617"/>
    </location>
</feature>
<feature type="active site" description="Proton acceptor" evidence="1">
    <location>
        <position position="520"/>
    </location>
</feature>
<feature type="binding site" evidence="1">
    <location>
        <position position="81"/>
    </location>
    <ligand>
        <name>Mg(2+)</name>
        <dbReference type="ChEBI" id="CHEBI:18420"/>
    </ligand>
</feature>
<feature type="binding site" evidence="1">
    <location>
        <position position="122"/>
    </location>
    <ligand>
        <name>[2Fe-2S] cluster</name>
        <dbReference type="ChEBI" id="CHEBI:190135"/>
    </ligand>
</feature>
<feature type="binding site" evidence="1">
    <location>
        <position position="123"/>
    </location>
    <ligand>
        <name>Mg(2+)</name>
        <dbReference type="ChEBI" id="CHEBI:18420"/>
    </ligand>
</feature>
<feature type="binding site" description="via carbamate group" evidence="1">
    <location>
        <position position="124"/>
    </location>
    <ligand>
        <name>Mg(2+)</name>
        <dbReference type="ChEBI" id="CHEBI:18420"/>
    </ligand>
</feature>
<feature type="binding site" evidence="1">
    <location>
        <position position="197"/>
    </location>
    <ligand>
        <name>[2Fe-2S] cluster</name>
        <dbReference type="ChEBI" id="CHEBI:190135"/>
    </ligand>
</feature>
<feature type="binding site" evidence="1">
    <location>
        <position position="494"/>
    </location>
    <ligand>
        <name>Mg(2+)</name>
        <dbReference type="ChEBI" id="CHEBI:18420"/>
    </ligand>
</feature>
<feature type="modified residue" description="N6-carboxylysine" evidence="1">
    <location>
        <position position="124"/>
    </location>
</feature>
<keyword id="KW-0001">2Fe-2S</keyword>
<keyword id="KW-0028">Amino-acid biosynthesis</keyword>
<keyword id="KW-0100">Branched-chain amino acid biosynthesis</keyword>
<keyword id="KW-0408">Iron</keyword>
<keyword id="KW-0411">Iron-sulfur</keyword>
<keyword id="KW-0456">Lyase</keyword>
<keyword id="KW-0460">Magnesium</keyword>
<keyword id="KW-0479">Metal-binding</keyword>
<evidence type="ECO:0000255" key="1">
    <source>
        <dbReference type="HAMAP-Rule" id="MF_00012"/>
    </source>
</evidence>
<dbReference type="EC" id="4.2.1.9" evidence="1"/>
<dbReference type="EMBL" id="CP000820">
    <property type="protein sequence ID" value="ABW16624.1"/>
    <property type="molecule type" value="Genomic_DNA"/>
</dbReference>
<dbReference type="RefSeq" id="WP_020464679.1">
    <property type="nucleotide sequence ID" value="NC_009921.1"/>
</dbReference>
<dbReference type="SMR" id="A8L8S7"/>
<dbReference type="STRING" id="298653.Franean1_7305"/>
<dbReference type="KEGG" id="fre:Franean1_7305"/>
<dbReference type="eggNOG" id="COG0129">
    <property type="taxonomic scope" value="Bacteria"/>
</dbReference>
<dbReference type="HOGENOM" id="CLU_014271_4_2_11"/>
<dbReference type="UniPathway" id="UPA00047">
    <property type="reaction ID" value="UER00057"/>
</dbReference>
<dbReference type="UniPathway" id="UPA00049">
    <property type="reaction ID" value="UER00061"/>
</dbReference>
<dbReference type="GO" id="GO:0005829">
    <property type="term" value="C:cytosol"/>
    <property type="evidence" value="ECO:0007669"/>
    <property type="project" value="TreeGrafter"/>
</dbReference>
<dbReference type="GO" id="GO:0051537">
    <property type="term" value="F:2 iron, 2 sulfur cluster binding"/>
    <property type="evidence" value="ECO:0007669"/>
    <property type="project" value="UniProtKB-UniRule"/>
</dbReference>
<dbReference type="GO" id="GO:0004160">
    <property type="term" value="F:dihydroxy-acid dehydratase activity"/>
    <property type="evidence" value="ECO:0007669"/>
    <property type="project" value="UniProtKB-UniRule"/>
</dbReference>
<dbReference type="GO" id="GO:0000287">
    <property type="term" value="F:magnesium ion binding"/>
    <property type="evidence" value="ECO:0007669"/>
    <property type="project" value="UniProtKB-UniRule"/>
</dbReference>
<dbReference type="GO" id="GO:0009097">
    <property type="term" value="P:isoleucine biosynthetic process"/>
    <property type="evidence" value="ECO:0007669"/>
    <property type="project" value="UniProtKB-UniRule"/>
</dbReference>
<dbReference type="GO" id="GO:0009099">
    <property type="term" value="P:L-valine biosynthetic process"/>
    <property type="evidence" value="ECO:0007669"/>
    <property type="project" value="UniProtKB-UniRule"/>
</dbReference>
<dbReference type="FunFam" id="3.50.30.80:FF:000001">
    <property type="entry name" value="Dihydroxy-acid dehydratase"/>
    <property type="match status" value="1"/>
</dbReference>
<dbReference type="Gene3D" id="3.50.30.80">
    <property type="entry name" value="IlvD/EDD C-terminal domain-like"/>
    <property type="match status" value="1"/>
</dbReference>
<dbReference type="HAMAP" id="MF_00012">
    <property type="entry name" value="IlvD"/>
    <property type="match status" value="1"/>
</dbReference>
<dbReference type="InterPro" id="IPR042096">
    <property type="entry name" value="Dihydro-acid_dehy_C"/>
</dbReference>
<dbReference type="InterPro" id="IPR004404">
    <property type="entry name" value="DihydroxyA_deHydtase"/>
</dbReference>
<dbReference type="InterPro" id="IPR020558">
    <property type="entry name" value="DiOHA_6PGluconate_deHydtase_CS"/>
</dbReference>
<dbReference type="InterPro" id="IPR056740">
    <property type="entry name" value="ILV_EDD_C"/>
</dbReference>
<dbReference type="InterPro" id="IPR000581">
    <property type="entry name" value="ILV_EDD_N"/>
</dbReference>
<dbReference type="InterPro" id="IPR037237">
    <property type="entry name" value="IlvD/EDD_N"/>
</dbReference>
<dbReference type="NCBIfam" id="TIGR00110">
    <property type="entry name" value="ilvD"/>
    <property type="match status" value="1"/>
</dbReference>
<dbReference type="NCBIfam" id="NF009103">
    <property type="entry name" value="PRK12448.1"/>
    <property type="match status" value="1"/>
</dbReference>
<dbReference type="PANTHER" id="PTHR43661">
    <property type="entry name" value="D-XYLONATE DEHYDRATASE"/>
    <property type="match status" value="1"/>
</dbReference>
<dbReference type="PANTHER" id="PTHR43661:SF3">
    <property type="entry name" value="D-XYLONATE DEHYDRATASE YAGF-RELATED"/>
    <property type="match status" value="1"/>
</dbReference>
<dbReference type="Pfam" id="PF24877">
    <property type="entry name" value="ILV_EDD_C"/>
    <property type="match status" value="1"/>
</dbReference>
<dbReference type="Pfam" id="PF00920">
    <property type="entry name" value="ILVD_EDD_N"/>
    <property type="match status" value="1"/>
</dbReference>
<dbReference type="SUPFAM" id="SSF143975">
    <property type="entry name" value="IlvD/EDD N-terminal domain-like"/>
    <property type="match status" value="1"/>
</dbReference>
<dbReference type="SUPFAM" id="SSF52016">
    <property type="entry name" value="LeuD/IlvD-like"/>
    <property type="match status" value="1"/>
</dbReference>
<dbReference type="PROSITE" id="PS00886">
    <property type="entry name" value="ILVD_EDD_1"/>
    <property type="match status" value="1"/>
</dbReference>
<dbReference type="PROSITE" id="PS00887">
    <property type="entry name" value="ILVD_EDD_2"/>
    <property type="match status" value="1"/>
</dbReference>
<name>ILVD_PARS2</name>
<reference key="1">
    <citation type="journal article" date="2007" name="Genome Res.">
        <title>Genome characteristics of facultatively symbiotic Frankia sp. strains reflect host range and host plant biogeography.</title>
        <authorList>
            <person name="Normand P."/>
            <person name="Lapierre P."/>
            <person name="Tisa L.S."/>
            <person name="Gogarten J.P."/>
            <person name="Alloisio N."/>
            <person name="Bagnarol E."/>
            <person name="Bassi C.A."/>
            <person name="Berry A.M."/>
            <person name="Bickhart D.M."/>
            <person name="Choisne N."/>
            <person name="Couloux A."/>
            <person name="Cournoyer B."/>
            <person name="Cruveiller S."/>
            <person name="Daubin V."/>
            <person name="Demange N."/>
            <person name="Francino M.P."/>
            <person name="Goltsman E."/>
            <person name="Huang Y."/>
            <person name="Kopp O.R."/>
            <person name="Labarre L."/>
            <person name="Lapidus A."/>
            <person name="Lavire C."/>
            <person name="Marechal J."/>
            <person name="Martinez M."/>
            <person name="Mastronunzio J.E."/>
            <person name="Mullin B.C."/>
            <person name="Niemann J."/>
            <person name="Pujic P."/>
            <person name="Rawnsley T."/>
            <person name="Rouy Z."/>
            <person name="Schenowitz C."/>
            <person name="Sellstedt A."/>
            <person name="Tavares F."/>
            <person name="Tomkins J.P."/>
            <person name="Vallenet D."/>
            <person name="Valverde C."/>
            <person name="Wall L.G."/>
            <person name="Wang Y."/>
            <person name="Medigue C."/>
            <person name="Benson D.R."/>
        </authorList>
    </citation>
    <scope>NUCLEOTIDE SEQUENCE [LARGE SCALE GENOMIC DNA]</scope>
    <source>
        <strain>EAN1pec</strain>
    </source>
</reference>
<gene>
    <name evidence="1" type="primary">ilvD</name>
    <name type="ordered locus">Franean1_7305</name>
</gene>
<protein>
    <recommendedName>
        <fullName evidence="1">Dihydroxy-acid dehydratase</fullName>
        <shortName evidence="1">DAD</shortName>
        <ecNumber evidence="1">4.2.1.9</ecNumber>
    </recommendedName>
</protein>
<proteinExistence type="inferred from homology"/>
<comment type="function">
    <text evidence="1">Functions in the biosynthesis of branched-chain amino acids. Catalyzes the dehydration of (2R,3R)-2,3-dihydroxy-3-methylpentanoate (2,3-dihydroxy-3-methylvalerate) into 2-oxo-3-methylpentanoate (2-oxo-3-methylvalerate) and of (2R)-2,3-dihydroxy-3-methylbutanoate (2,3-dihydroxyisovalerate) into 2-oxo-3-methylbutanoate (2-oxoisovalerate), the penultimate precursor to L-isoleucine and L-valine, respectively.</text>
</comment>
<comment type="catalytic activity">
    <reaction evidence="1">
        <text>(2R)-2,3-dihydroxy-3-methylbutanoate = 3-methyl-2-oxobutanoate + H2O</text>
        <dbReference type="Rhea" id="RHEA:24809"/>
        <dbReference type="ChEBI" id="CHEBI:11851"/>
        <dbReference type="ChEBI" id="CHEBI:15377"/>
        <dbReference type="ChEBI" id="CHEBI:49072"/>
        <dbReference type="EC" id="4.2.1.9"/>
    </reaction>
    <physiologicalReaction direction="left-to-right" evidence="1">
        <dbReference type="Rhea" id="RHEA:24810"/>
    </physiologicalReaction>
</comment>
<comment type="catalytic activity">
    <reaction evidence="1">
        <text>(2R,3R)-2,3-dihydroxy-3-methylpentanoate = (S)-3-methyl-2-oxopentanoate + H2O</text>
        <dbReference type="Rhea" id="RHEA:27694"/>
        <dbReference type="ChEBI" id="CHEBI:15377"/>
        <dbReference type="ChEBI" id="CHEBI:35146"/>
        <dbReference type="ChEBI" id="CHEBI:49258"/>
        <dbReference type="EC" id="4.2.1.9"/>
    </reaction>
    <physiologicalReaction direction="left-to-right" evidence="1">
        <dbReference type="Rhea" id="RHEA:27695"/>
    </physiologicalReaction>
</comment>
<comment type="cofactor">
    <cofactor evidence="1">
        <name>[2Fe-2S] cluster</name>
        <dbReference type="ChEBI" id="CHEBI:190135"/>
    </cofactor>
    <text evidence="1">Binds 1 [2Fe-2S] cluster per subunit. This cluster acts as a Lewis acid cofactor.</text>
</comment>
<comment type="cofactor">
    <cofactor evidence="1">
        <name>Mg(2+)</name>
        <dbReference type="ChEBI" id="CHEBI:18420"/>
    </cofactor>
</comment>
<comment type="pathway">
    <text evidence="1">Amino-acid biosynthesis; L-isoleucine biosynthesis; L-isoleucine from 2-oxobutanoate: step 3/4.</text>
</comment>
<comment type="pathway">
    <text evidence="1">Amino-acid biosynthesis; L-valine biosynthesis; L-valine from pyruvate: step 3/4.</text>
</comment>
<comment type="subunit">
    <text evidence="1">Homodimer.</text>
</comment>
<comment type="similarity">
    <text evidence="1">Belongs to the IlvD/Edd family.</text>
</comment>
<organism>
    <name type="scientific">Parafrankia sp. (strain EAN1pec)</name>
    <dbReference type="NCBI Taxonomy" id="298653"/>
    <lineage>
        <taxon>Bacteria</taxon>
        <taxon>Bacillati</taxon>
        <taxon>Actinomycetota</taxon>
        <taxon>Actinomycetes</taxon>
        <taxon>Frankiales</taxon>
        <taxon>Frankiaceae</taxon>
        <taxon>Parafrankia</taxon>
    </lineage>
</organism>
<sequence length="617" mass="64400">MPALRSRTTTHGRNMAGARALWRATGMTDDDFGKPIVAIANSFTQFVPGHVHLRDLGKIVADAVAGSGGVAKEFNTIAVDDGIAMGHGGMLYSLPSREIIADSVEYMVNAHCADALVCISNCDKITPGMLIAALRLNIPTVFVSGGAMESGHAVVTGGIVRSRLDLIDAMTAAVNPDVSDADLDTIERSACPTCGSCSGMFTANSMNCLTEALGLALPGNGSTLATAAARRGLFVEAGRLVVDLARRYYEKDDEAVLPRSIASAAAFRNAFAVDVAMGGSTNTVLHLLAAAVEAGVEVTLDDIDQVSRSVACLCKVAPSSTDYYMEDVHRAGGIPAILGELDRGGLVDPNVHSVHAASLREFLDRWDVRGADPSPDAIELFHAAPGGVRTVEPFGSTNRWDTLDTDAKNGCIRSVEHAYSADGGLAVLRGNLAPDGAVVKTAGVDESQWTFRGPALVVESQEAAVDAILNKVVKAGDVIIVRYEGPRGGPGMQEMLYPTAFLKGRGLGPKCALITDGRFSGGSSGLSIGHVSPEAAHGGPIALVRDGDLVEIDIPRRRIDLLVPDAELAARRAEIEANGGYHPANRERVVSAALRAYAAMATSASTGAARDVRLITG</sequence>
<accession>A8L8S7</accession>